<protein>
    <recommendedName>
        <fullName evidence="1">Sulfate adenylyltransferase</fullName>
        <ecNumber evidence="1">2.7.7.4</ecNumber>
    </recommendedName>
    <alternativeName>
        <fullName evidence="1">ATP-sulfurylase</fullName>
    </alternativeName>
    <alternativeName>
        <fullName evidence="1">Methionine-requiring protein 3</fullName>
    </alternativeName>
    <alternativeName>
        <fullName evidence="1">Sulfate adenylate transferase</fullName>
        <shortName evidence="1">SAT</shortName>
    </alternativeName>
</protein>
<name>MET3_YEAST</name>
<evidence type="ECO:0000255" key="1">
    <source>
        <dbReference type="HAMAP-Rule" id="MF_03106"/>
    </source>
</evidence>
<evidence type="ECO:0000269" key="2">
    <source>
    </source>
</evidence>
<evidence type="ECO:0000269" key="3">
    <source>
    </source>
</evidence>
<evidence type="ECO:0000269" key="4">
    <source>
    </source>
</evidence>
<evidence type="ECO:0000269" key="5">
    <source>
    </source>
</evidence>
<evidence type="ECO:0000269" key="6">
    <source>
    </source>
</evidence>
<evidence type="ECO:0000305" key="7"/>
<evidence type="ECO:0000305" key="8">
    <source>
    </source>
</evidence>
<evidence type="ECO:0000305" key="9">
    <source>
    </source>
</evidence>
<evidence type="ECO:0007829" key="10">
    <source>
        <dbReference type="PDB" id="1G8F"/>
    </source>
</evidence>
<evidence type="ECO:0007829" key="11">
    <source>
        <dbReference type="PDB" id="1R6X"/>
    </source>
</evidence>
<comment type="function">
    <text evidence="1">Catalyzes the first intracellular reaction of sulfate assimilation, forming adenosine-5'-phosphosulfate (APS) from inorganic sulfate and ATP. Plays an important role in sulfate activation as a component of the biosynthesis pathway of sulfur-containing amino acids.</text>
</comment>
<comment type="catalytic activity">
    <reaction evidence="1">
        <text>sulfate + ATP + H(+) = adenosine 5'-phosphosulfate + diphosphate</text>
        <dbReference type="Rhea" id="RHEA:18133"/>
        <dbReference type="ChEBI" id="CHEBI:15378"/>
        <dbReference type="ChEBI" id="CHEBI:16189"/>
        <dbReference type="ChEBI" id="CHEBI:30616"/>
        <dbReference type="ChEBI" id="CHEBI:33019"/>
        <dbReference type="ChEBI" id="CHEBI:58243"/>
        <dbReference type="EC" id="2.7.7.4"/>
    </reaction>
</comment>
<comment type="biophysicochemical properties">
    <kinetics>
        <KM evidence="5">0.65 mM for Sulfate</KM>
        <KM evidence="5">0.082 mM for ATP</KM>
    </kinetics>
</comment>
<comment type="pathway">
    <text evidence="1">Sulfur metabolism; hydrogen sulfide biosynthesis; sulfite from sulfate: step 1/3.</text>
</comment>
<comment type="subunit">
    <text evidence="1 2 5">Homohexamer. Dimer of trimers.</text>
</comment>
<comment type="subcellular location">
    <subcellularLocation>
        <location evidence="1 3">Cytoplasm</location>
    </subcellularLocation>
</comment>
<comment type="induction">
    <text evidence="6">Expression depends on the formation of the MET4-MET28-MET31 and MET4-MET28-MET32 complexes on its 5' upstream region.</text>
</comment>
<comment type="domain">
    <text evidence="1 2 5">The oligomerization domain is distantly related to APS kinases, but it is not functional and does not bind APS. It is required for oligomerization of the enzyme, although the oligomerization state has no effect on the catalytic activity of the enzyme.</text>
</comment>
<comment type="miscellaneous">
    <text evidence="4">Present with 1510 molecules/cell in log phase SD medium.</text>
</comment>
<comment type="similarity">
    <text evidence="1">Belongs to the sulfate adenylyltransferase family.</text>
</comment>
<comment type="sequence caution" evidence="7">
    <conflict type="frameshift">
        <sequence resource="EMBL-CDS" id="CAA29702"/>
    </conflict>
</comment>
<comment type="sequence caution" evidence="7">
    <conflict type="frameshift">
        <sequence resource="EMBL-CDS" id="CAA42726"/>
    </conflict>
</comment>
<sequence length="511" mass="57725">MPAPHGGILQDLIARDALKKNELLSEAQSSDILVWNLTPRQLCDIELILNGGFSPLTGFLNENDYSSVVTDSRLADGTLWTIPITLDVDEAFANQIKPDTRIALFQDDEIPIAILTVQDVYKPNKTIEAEKVFRGDPEHPAISYLFNVAGDYYVGGSLEAIQLPQHYDYPGLRKTPAQLRLEFQSRQWDRVVAFQTRNPMHRAHRELTVRAAREANAKVLIHPVVGLTKPGDIDHHTRVRVYQEIIKRYPNGIAFLSLLPLAMRMSGDREAVWHAIIRKNYGASHFIVGRDHAGPGKNSKGVDFYGPYDAQELVESYKHELDIEVVPFRMVTYLPDEDRYAPIDQIDTTKTRTLNISGTELRRRLRVGGEIPEWFSYPEVVKILRESNPPRPKQGFSIVLGNSLTVSREQLSIALLSTFLQFGGGRYYKIFEHNNKTELLSLIQDFIGSGSGLIIPNQWEDDKDSVVGKQNVYLLDTSSSADIQLESADEPISHIVQKVVLFLEDNGFFVF</sequence>
<organism>
    <name type="scientific">Saccharomyces cerevisiae (strain ATCC 204508 / S288c)</name>
    <name type="common">Baker's yeast</name>
    <dbReference type="NCBI Taxonomy" id="559292"/>
    <lineage>
        <taxon>Eukaryota</taxon>
        <taxon>Fungi</taxon>
        <taxon>Dikarya</taxon>
        <taxon>Ascomycota</taxon>
        <taxon>Saccharomycotina</taxon>
        <taxon>Saccharomycetes</taxon>
        <taxon>Saccharomycetales</taxon>
        <taxon>Saccharomycetaceae</taxon>
        <taxon>Saccharomyces</taxon>
    </lineage>
</organism>
<dbReference type="EC" id="2.7.7.4" evidence="1"/>
<dbReference type="EMBL" id="X06413">
    <property type="protein sequence ID" value="CAA29702.1"/>
    <property type="status" value="ALT_FRAME"/>
    <property type="molecule type" value="Genomic_DNA"/>
</dbReference>
<dbReference type="EMBL" id="X60157">
    <property type="protein sequence ID" value="CAA42726.1"/>
    <property type="status" value="ALT_FRAME"/>
    <property type="molecule type" value="Genomic_DNA"/>
</dbReference>
<dbReference type="EMBL" id="X87611">
    <property type="protein sequence ID" value="CAA60932.1"/>
    <property type="molecule type" value="Genomic_DNA"/>
</dbReference>
<dbReference type="EMBL" id="Z49510">
    <property type="protein sequence ID" value="CAA89532.1"/>
    <property type="molecule type" value="Genomic_DNA"/>
</dbReference>
<dbReference type="EMBL" id="AY723835">
    <property type="protein sequence ID" value="AAU09752.1"/>
    <property type="molecule type" value="Genomic_DNA"/>
</dbReference>
<dbReference type="EMBL" id="BK006943">
    <property type="protein sequence ID" value="DAA08801.1"/>
    <property type="molecule type" value="Genomic_DNA"/>
</dbReference>
<dbReference type="PIR" id="S55198">
    <property type="entry name" value="S55198"/>
</dbReference>
<dbReference type="RefSeq" id="NP_012543.3">
    <property type="nucleotide sequence ID" value="NM_001181668.3"/>
</dbReference>
<dbReference type="PDB" id="1G8F">
    <property type="method" value="X-ray"/>
    <property type="resolution" value="1.95 A"/>
    <property type="chains" value="A=1-511"/>
</dbReference>
<dbReference type="PDB" id="1G8G">
    <property type="method" value="X-ray"/>
    <property type="resolution" value="2.60 A"/>
    <property type="chains" value="A/B=1-511"/>
</dbReference>
<dbReference type="PDB" id="1G8H">
    <property type="method" value="X-ray"/>
    <property type="resolution" value="2.80 A"/>
    <property type="chains" value="A/B=1-511"/>
</dbReference>
<dbReference type="PDB" id="1J70">
    <property type="method" value="X-ray"/>
    <property type="resolution" value="2.30 A"/>
    <property type="chains" value="A/B/C=1-511"/>
</dbReference>
<dbReference type="PDB" id="1JEC">
    <property type="method" value="X-ray"/>
    <property type="resolution" value="2.50 A"/>
    <property type="chains" value="A=2-511"/>
</dbReference>
<dbReference type="PDB" id="1JED">
    <property type="method" value="X-ray"/>
    <property type="resolution" value="2.95 A"/>
    <property type="chains" value="A/B=2-511"/>
</dbReference>
<dbReference type="PDB" id="1JEE">
    <property type="method" value="X-ray"/>
    <property type="resolution" value="2.80 A"/>
    <property type="chains" value="A/B=2-511"/>
</dbReference>
<dbReference type="PDB" id="1R6X">
    <property type="method" value="X-ray"/>
    <property type="resolution" value="1.40 A"/>
    <property type="chains" value="A=2-393"/>
</dbReference>
<dbReference type="PDBsum" id="1G8F"/>
<dbReference type="PDBsum" id="1G8G"/>
<dbReference type="PDBsum" id="1G8H"/>
<dbReference type="PDBsum" id="1J70"/>
<dbReference type="PDBsum" id="1JEC"/>
<dbReference type="PDBsum" id="1JED"/>
<dbReference type="PDBsum" id="1JEE"/>
<dbReference type="PDBsum" id="1R6X"/>
<dbReference type="SMR" id="P08536"/>
<dbReference type="BioGRID" id="33766">
    <property type="interactions" value="59"/>
</dbReference>
<dbReference type="DIP" id="DIP-4303N"/>
<dbReference type="FunCoup" id="P08536">
    <property type="interactions" value="734"/>
</dbReference>
<dbReference type="IntAct" id="P08536">
    <property type="interactions" value="7"/>
</dbReference>
<dbReference type="MINT" id="P08536"/>
<dbReference type="STRING" id="4932.YJR010W"/>
<dbReference type="GlyGen" id="P08536">
    <property type="glycosylation" value="5 sites, 1 O-linked glycan (5 sites)"/>
</dbReference>
<dbReference type="iPTMnet" id="P08536"/>
<dbReference type="PaxDb" id="4932-YJR010W"/>
<dbReference type="PeptideAtlas" id="P08536"/>
<dbReference type="TopDownProteomics" id="P08536"/>
<dbReference type="EnsemblFungi" id="YJR010W_mRNA">
    <property type="protein sequence ID" value="YJR010W"/>
    <property type="gene ID" value="YJR010W"/>
</dbReference>
<dbReference type="GeneID" id="853466"/>
<dbReference type="KEGG" id="sce:YJR010W"/>
<dbReference type="AGR" id="SGD:S000003771"/>
<dbReference type="SGD" id="S000003771">
    <property type="gene designation" value="MET3"/>
</dbReference>
<dbReference type="VEuPathDB" id="FungiDB:YJR010W"/>
<dbReference type="eggNOG" id="KOG0636">
    <property type="taxonomic scope" value="Eukaryota"/>
</dbReference>
<dbReference type="GeneTree" id="ENSGT00390000009613"/>
<dbReference type="HOGENOM" id="CLU_022950_1_0_1"/>
<dbReference type="InParanoid" id="P08536"/>
<dbReference type="OMA" id="EWFSFPE"/>
<dbReference type="OrthoDB" id="468at2759"/>
<dbReference type="BioCyc" id="MetaCyc:YJR010W-MONOMER"/>
<dbReference type="BioCyc" id="YEAST:YJR010W-MONOMER"/>
<dbReference type="BRENDA" id="2.7.7.4">
    <property type="organism ID" value="984"/>
</dbReference>
<dbReference type="SABIO-RK" id="P08536"/>
<dbReference type="UniPathway" id="UPA00140">
    <property type="reaction ID" value="UER00204"/>
</dbReference>
<dbReference type="BioGRID-ORCS" id="853466">
    <property type="hits" value="3 hits in 10 CRISPR screens"/>
</dbReference>
<dbReference type="CD-CODE" id="E03F929F">
    <property type="entry name" value="Stress granule"/>
</dbReference>
<dbReference type="EvolutionaryTrace" id="P08536"/>
<dbReference type="PRO" id="PR:P08536"/>
<dbReference type="Proteomes" id="UP000002311">
    <property type="component" value="Chromosome X"/>
</dbReference>
<dbReference type="RNAct" id="P08536">
    <property type="molecule type" value="protein"/>
</dbReference>
<dbReference type="GO" id="GO:0005737">
    <property type="term" value="C:cytoplasm"/>
    <property type="evidence" value="ECO:0007005"/>
    <property type="project" value="SGD"/>
</dbReference>
<dbReference type="GO" id="GO:0005739">
    <property type="term" value="C:mitochondrion"/>
    <property type="evidence" value="ECO:0007005"/>
    <property type="project" value="SGD"/>
</dbReference>
<dbReference type="GO" id="GO:0005524">
    <property type="term" value="F:ATP binding"/>
    <property type="evidence" value="ECO:0007669"/>
    <property type="project" value="UniProtKB-KW"/>
</dbReference>
<dbReference type="GO" id="GO:0004781">
    <property type="term" value="F:sulfate adenylyltransferase (ATP) activity"/>
    <property type="evidence" value="ECO:0000314"/>
    <property type="project" value="SGD"/>
</dbReference>
<dbReference type="GO" id="GO:0070814">
    <property type="term" value="P:hydrogen sulfide biosynthetic process"/>
    <property type="evidence" value="ECO:0007669"/>
    <property type="project" value="UniProtKB-UniRule"/>
</dbReference>
<dbReference type="GO" id="GO:0019379">
    <property type="term" value="P:sulfate assimilation, phosphoadenylyl sulfate reduction by phosphoadenylyl-sulfate reductase (thioredoxin)"/>
    <property type="evidence" value="ECO:0000315"/>
    <property type="project" value="SGD"/>
</dbReference>
<dbReference type="GO" id="GO:0000096">
    <property type="term" value="P:sulfur amino acid metabolic process"/>
    <property type="evidence" value="ECO:0000315"/>
    <property type="project" value="SGD"/>
</dbReference>
<dbReference type="CDD" id="cd00517">
    <property type="entry name" value="ATPS"/>
    <property type="match status" value="1"/>
</dbReference>
<dbReference type="FunFam" id="3.10.400.10:FF:000006">
    <property type="entry name" value="Sulfate adenylyltransferase"/>
    <property type="match status" value="1"/>
</dbReference>
<dbReference type="FunFam" id="3.40.50.300:FF:002764">
    <property type="entry name" value="Sulfate adenylyltransferase"/>
    <property type="match status" value="1"/>
</dbReference>
<dbReference type="FunFam" id="3.40.50.620:FF:000052">
    <property type="entry name" value="Sulfate adenylyltransferase"/>
    <property type="match status" value="1"/>
</dbReference>
<dbReference type="Gene3D" id="3.40.50.620">
    <property type="entry name" value="HUPs"/>
    <property type="match status" value="1"/>
</dbReference>
<dbReference type="Gene3D" id="3.40.50.300">
    <property type="entry name" value="P-loop containing nucleotide triphosphate hydrolases"/>
    <property type="match status" value="1"/>
</dbReference>
<dbReference type="Gene3D" id="3.10.400.10">
    <property type="entry name" value="Sulfate adenylyltransferase"/>
    <property type="match status" value="1"/>
</dbReference>
<dbReference type="HAMAP" id="MF_03106">
    <property type="entry name" value="Sulf_adenylyltr_euk"/>
    <property type="match status" value="1"/>
</dbReference>
<dbReference type="InterPro" id="IPR025980">
    <property type="entry name" value="ATP-Sase_PUA-like_dom"/>
</dbReference>
<dbReference type="InterPro" id="IPR027417">
    <property type="entry name" value="P-loop_NTPase"/>
</dbReference>
<dbReference type="InterPro" id="IPR015947">
    <property type="entry name" value="PUA-like_sf"/>
</dbReference>
<dbReference type="InterPro" id="IPR014729">
    <property type="entry name" value="Rossmann-like_a/b/a_fold"/>
</dbReference>
<dbReference type="InterPro" id="IPR027535">
    <property type="entry name" value="Sulf_adenylyltr_euk"/>
</dbReference>
<dbReference type="InterPro" id="IPR050512">
    <property type="entry name" value="Sulf_AdTrans/APS_kinase"/>
</dbReference>
<dbReference type="InterPro" id="IPR024951">
    <property type="entry name" value="Sulfurylase_cat_dom"/>
</dbReference>
<dbReference type="InterPro" id="IPR002650">
    <property type="entry name" value="Sulphate_adenylyltransferase"/>
</dbReference>
<dbReference type="NCBIfam" id="TIGR00339">
    <property type="entry name" value="sopT"/>
    <property type="match status" value="1"/>
</dbReference>
<dbReference type="PANTHER" id="PTHR42700">
    <property type="entry name" value="SULFATE ADENYLYLTRANSFERASE"/>
    <property type="match status" value="1"/>
</dbReference>
<dbReference type="PANTHER" id="PTHR42700:SF1">
    <property type="entry name" value="SULFATE ADENYLYLTRANSFERASE"/>
    <property type="match status" value="1"/>
</dbReference>
<dbReference type="Pfam" id="PF01747">
    <property type="entry name" value="ATP-sulfurylase"/>
    <property type="match status" value="1"/>
</dbReference>
<dbReference type="Pfam" id="PF14306">
    <property type="entry name" value="PUA_2"/>
    <property type="match status" value="1"/>
</dbReference>
<dbReference type="SUPFAM" id="SSF52374">
    <property type="entry name" value="Nucleotidylyl transferase"/>
    <property type="match status" value="1"/>
</dbReference>
<dbReference type="SUPFAM" id="SSF52540">
    <property type="entry name" value="P-loop containing nucleoside triphosphate hydrolases"/>
    <property type="match status" value="1"/>
</dbReference>
<dbReference type="SUPFAM" id="SSF88697">
    <property type="entry name" value="PUA domain-like"/>
    <property type="match status" value="1"/>
</dbReference>
<accession>P08536</accession>
<accession>D6VWI5</accession>
<accession>Q66R66</accession>
<feature type="chain" id="PRO_0000105954" description="Sulfate adenylyltransferase">
    <location>
        <begin position="1"/>
        <end position="511"/>
    </location>
</feature>
<feature type="region of interest" description="N-terminal" evidence="1 8">
    <location>
        <begin position="1"/>
        <end position="167"/>
    </location>
</feature>
<feature type="region of interest" description="Catalytic" evidence="1 8">
    <location>
        <begin position="168"/>
        <end position="393"/>
    </location>
</feature>
<feature type="region of interest" description="Required for oligomerization; adenylyl-sulfate kinase-like" evidence="1 9">
    <location>
        <begin position="394"/>
        <end position="511"/>
    </location>
</feature>
<feature type="active site" evidence="1 8">
    <location>
        <position position="196"/>
    </location>
</feature>
<feature type="active site" evidence="1 8">
    <location>
        <position position="197"/>
    </location>
</feature>
<feature type="active site" evidence="1 8">
    <location>
        <position position="198"/>
    </location>
</feature>
<feature type="binding site" evidence="1 2">
    <location>
        <begin position="195"/>
        <end position="198"/>
    </location>
    <ligand>
        <name>ATP</name>
        <dbReference type="ChEBI" id="CHEBI:30616"/>
    </ligand>
</feature>
<feature type="binding site" evidence="1 2">
    <location>
        <position position="195"/>
    </location>
    <ligand>
        <name>sulfate</name>
        <dbReference type="ChEBI" id="CHEBI:16189"/>
    </ligand>
</feature>
<feature type="binding site" evidence="1 2">
    <location>
        <position position="197"/>
    </location>
    <ligand>
        <name>sulfate</name>
        <dbReference type="ChEBI" id="CHEBI:16189"/>
    </ligand>
</feature>
<feature type="binding site" evidence="1 2">
    <location>
        <begin position="289"/>
        <end position="292"/>
    </location>
    <ligand>
        <name>ATP</name>
        <dbReference type="ChEBI" id="CHEBI:30616"/>
    </ligand>
</feature>
<feature type="binding site" evidence="1 2">
    <location>
        <position position="293"/>
    </location>
    <ligand>
        <name>sulfate</name>
        <dbReference type="ChEBI" id="CHEBI:16189"/>
    </ligand>
</feature>
<feature type="binding site" evidence="1 2">
    <location>
        <position position="331"/>
    </location>
    <ligand>
        <name>ATP</name>
        <dbReference type="ChEBI" id="CHEBI:30616"/>
    </ligand>
</feature>
<feature type="site" description="Transition state stabilizer" evidence="1 8">
    <location>
        <position position="201"/>
    </location>
</feature>
<feature type="site" description="Transition state stabilizer" evidence="1 8">
    <location>
        <position position="204"/>
    </location>
</feature>
<feature type="site" description="Induces change in substrate recognition on ATP binding" evidence="1 8">
    <location>
        <position position="328"/>
    </location>
</feature>
<feature type="sequence conflict" description="In Ref. 5; AAU09752." evidence="7" ref="5">
    <original>I</original>
    <variation>T</variation>
    <location>
        <position position="221"/>
    </location>
</feature>
<feature type="helix" evidence="11">
    <location>
        <begin position="12"/>
        <end position="15"/>
    </location>
</feature>
<feature type="helix" evidence="11">
    <location>
        <begin position="17"/>
        <end position="19"/>
    </location>
</feature>
<feature type="helix" evidence="11">
    <location>
        <begin position="20"/>
        <end position="27"/>
    </location>
</feature>
<feature type="strand" evidence="11">
    <location>
        <begin position="32"/>
        <end position="36"/>
    </location>
</feature>
<feature type="helix" evidence="11">
    <location>
        <begin position="39"/>
        <end position="49"/>
    </location>
</feature>
<feature type="turn" evidence="11">
    <location>
        <begin position="51"/>
        <end position="55"/>
    </location>
</feature>
<feature type="helix" evidence="11">
    <location>
        <begin position="62"/>
        <end position="71"/>
    </location>
</feature>
<feature type="strand" evidence="11">
    <location>
        <begin position="86"/>
        <end position="88"/>
    </location>
</feature>
<feature type="helix" evidence="11">
    <location>
        <begin position="90"/>
        <end position="94"/>
    </location>
</feature>
<feature type="strand" evidence="11">
    <location>
        <begin position="101"/>
        <end position="106"/>
    </location>
</feature>
<feature type="turn" evidence="11">
    <location>
        <begin position="107"/>
        <end position="109"/>
    </location>
</feature>
<feature type="strand" evidence="11">
    <location>
        <begin position="110"/>
        <end position="121"/>
    </location>
</feature>
<feature type="helix" evidence="11">
    <location>
        <begin position="125"/>
        <end position="133"/>
    </location>
</feature>
<feature type="helix" evidence="11">
    <location>
        <begin position="140"/>
        <end position="147"/>
    </location>
</feature>
<feature type="strand" evidence="11">
    <location>
        <begin position="151"/>
        <end position="161"/>
    </location>
</feature>
<feature type="turn" evidence="10">
    <location>
        <begin position="170"/>
        <end position="172"/>
    </location>
</feature>
<feature type="helix" evidence="11">
    <location>
        <begin position="176"/>
        <end position="185"/>
    </location>
</feature>
<feature type="strand" evidence="11">
    <location>
        <begin position="191"/>
        <end position="194"/>
    </location>
</feature>
<feature type="helix" evidence="11">
    <location>
        <begin position="202"/>
        <end position="214"/>
    </location>
</feature>
<feature type="strand" evidence="11">
    <location>
        <begin position="218"/>
        <end position="221"/>
    </location>
</feature>
<feature type="helix" evidence="11">
    <location>
        <begin position="235"/>
        <end position="245"/>
    </location>
</feature>
<feature type="helix" evidence="11">
    <location>
        <begin position="246"/>
        <end position="248"/>
    </location>
</feature>
<feature type="strand" evidence="11">
    <location>
        <begin position="254"/>
        <end position="256"/>
    </location>
</feature>
<feature type="helix" evidence="11">
    <location>
        <begin position="267"/>
        <end position="280"/>
    </location>
</feature>
<feature type="strand" evidence="11">
    <location>
        <begin position="284"/>
        <end position="288"/>
    </location>
</feature>
<feature type="turn" evidence="11">
    <location>
        <begin position="290"/>
        <end position="293"/>
    </location>
</feature>
<feature type="strand" evidence="11">
    <location>
        <begin position="303"/>
        <end position="305"/>
    </location>
</feature>
<feature type="helix" evidence="11">
    <location>
        <begin position="309"/>
        <end position="321"/>
    </location>
</feature>
<feature type="strand" evidence="11">
    <location>
        <begin position="324"/>
        <end position="327"/>
    </location>
</feature>
<feature type="strand" evidence="11">
    <location>
        <begin position="331"/>
        <end position="334"/>
    </location>
</feature>
<feature type="helix" evidence="11">
    <location>
        <begin position="335"/>
        <end position="337"/>
    </location>
</feature>
<feature type="strand" evidence="11">
    <location>
        <begin position="339"/>
        <end position="342"/>
    </location>
</feature>
<feature type="turn" evidence="11">
    <location>
        <begin position="343"/>
        <end position="345"/>
    </location>
</feature>
<feature type="strand" evidence="11">
    <location>
        <begin position="348"/>
        <end position="350"/>
    </location>
</feature>
<feature type="helix" evidence="11">
    <location>
        <begin position="358"/>
        <end position="366"/>
    </location>
</feature>
<feature type="turn" evidence="11">
    <location>
        <begin position="373"/>
        <end position="375"/>
    </location>
</feature>
<feature type="helix" evidence="11">
    <location>
        <begin position="378"/>
        <end position="384"/>
    </location>
</feature>
<feature type="helix" evidence="10">
    <location>
        <begin position="391"/>
        <end position="393"/>
    </location>
</feature>
<feature type="strand" evidence="10">
    <location>
        <begin position="396"/>
        <end position="400"/>
    </location>
</feature>
<feature type="helix" evidence="10">
    <location>
        <begin position="408"/>
        <end position="419"/>
    </location>
</feature>
<feature type="strand" evidence="10">
    <location>
        <begin position="428"/>
        <end position="430"/>
    </location>
</feature>
<feature type="helix" evidence="10">
    <location>
        <begin position="437"/>
        <end position="440"/>
    </location>
</feature>
<feature type="helix" evidence="10">
    <location>
        <begin position="443"/>
        <end position="448"/>
    </location>
</feature>
<feature type="strand" evidence="10">
    <location>
        <begin position="452"/>
        <end position="457"/>
    </location>
</feature>
<feature type="helix" evidence="10">
    <location>
        <begin position="461"/>
        <end position="466"/>
    </location>
</feature>
<feature type="strand" evidence="10">
    <location>
        <begin position="472"/>
        <end position="478"/>
    </location>
</feature>
<feature type="strand" evidence="10">
    <location>
        <begin position="482"/>
        <end position="484"/>
    </location>
</feature>
<feature type="helix" evidence="10">
    <location>
        <begin position="492"/>
        <end position="505"/>
    </location>
</feature>
<keyword id="KW-0002">3D-structure</keyword>
<keyword id="KW-0067">ATP-binding</keyword>
<keyword id="KW-0963">Cytoplasm</keyword>
<keyword id="KW-0547">Nucleotide-binding</keyword>
<keyword id="KW-0548">Nucleotidyltransferase</keyword>
<keyword id="KW-1185">Reference proteome</keyword>
<keyword id="KW-0808">Transferase</keyword>
<gene>
    <name evidence="1" type="primary">MET3</name>
    <name type="ordered locus">YJR010W</name>
    <name type="ORF">J1436</name>
</gene>
<reference key="1">
    <citation type="journal article" date="1987" name="Mol. Gen. Genet.">
        <title>The Saccharomyces cerevisiae MET3 gene: nucleotide sequence and relationship of the 5' non-coding region to that of MET25.</title>
        <authorList>
            <person name="Cherest H."/>
            <person name="Kerjan P."/>
            <person name="Surdin-Kerjan Y."/>
        </authorList>
    </citation>
    <scope>NUCLEOTIDE SEQUENCE [GENOMIC DNA]</scope>
    <source>
        <strain>FL100A</strain>
    </source>
</reference>
<reference key="2">
    <citation type="journal article" date="1991" name="Yeast">
        <title>TDH2 is linked to MET3 on chromosome X of Saccharomyces cerevisiae.</title>
        <authorList>
            <person name="Mountain H.A."/>
            <person name="Korch C."/>
        </authorList>
    </citation>
    <scope>NUCLEOTIDE SEQUENCE [GENOMIC DNA]</scope>
    <source>
        <strain>ATCC 204508 / S288c</strain>
    </source>
</reference>
<reference key="3">
    <citation type="journal article" date="1996" name="EMBO J.">
        <title>Complete nucleotide sequence of Saccharomyces cerevisiae chromosome X.</title>
        <authorList>
            <person name="Galibert F."/>
            <person name="Alexandraki D."/>
            <person name="Baur A."/>
            <person name="Boles E."/>
            <person name="Chalwatzis N."/>
            <person name="Chuat J.-C."/>
            <person name="Coster F."/>
            <person name="Cziepluch C."/>
            <person name="de Haan M."/>
            <person name="Domdey H."/>
            <person name="Durand P."/>
            <person name="Entian K.-D."/>
            <person name="Gatius M."/>
            <person name="Goffeau A."/>
            <person name="Grivell L.A."/>
            <person name="Hennemann A."/>
            <person name="Herbert C.J."/>
            <person name="Heumann K."/>
            <person name="Hilger F."/>
            <person name="Hollenberg C.P."/>
            <person name="Huang M.-E."/>
            <person name="Jacq C."/>
            <person name="Jauniaux J.-C."/>
            <person name="Katsoulou C."/>
            <person name="Kirchrath L."/>
            <person name="Kleine K."/>
            <person name="Kordes E."/>
            <person name="Koetter P."/>
            <person name="Liebl S."/>
            <person name="Louis E.J."/>
            <person name="Manus V."/>
            <person name="Mewes H.-W."/>
            <person name="Miosga T."/>
            <person name="Obermaier B."/>
            <person name="Perea J."/>
            <person name="Pohl T.M."/>
            <person name="Portetelle D."/>
            <person name="Pujol A."/>
            <person name="Purnelle B."/>
            <person name="Ramezani Rad M."/>
            <person name="Rasmussen S.W."/>
            <person name="Rose M."/>
            <person name="Rossau R."/>
            <person name="Schaaff-Gerstenschlaeger I."/>
            <person name="Smits P.H.M."/>
            <person name="Scarcez T."/>
            <person name="Soriano N."/>
            <person name="To Van D."/>
            <person name="Tzermia M."/>
            <person name="Van Broekhoven A."/>
            <person name="Vandenbol M."/>
            <person name="Wedler H."/>
            <person name="von Wettstein D."/>
            <person name="Wambutt R."/>
            <person name="Zagulski M."/>
            <person name="Zollner A."/>
            <person name="Karpfinger-Hartl L."/>
        </authorList>
    </citation>
    <scope>NUCLEOTIDE SEQUENCE [LARGE SCALE GENOMIC DNA]</scope>
    <source>
        <strain>ATCC 204508 / S288c</strain>
    </source>
</reference>
<reference key="4">
    <citation type="journal article" date="2014" name="G3 (Bethesda)">
        <title>The reference genome sequence of Saccharomyces cerevisiae: Then and now.</title>
        <authorList>
            <person name="Engel S.R."/>
            <person name="Dietrich F.S."/>
            <person name="Fisk D.G."/>
            <person name="Binkley G."/>
            <person name="Balakrishnan R."/>
            <person name="Costanzo M.C."/>
            <person name="Dwight S.S."/>
            <person name="Hitz B.C."/>
            <person name="Karra K."/>
            <person name="Nash R.S."/>
            <person name="Weng S."/>
            <person name="Wong E.D."/>
            <person name="Lloyd P."/>
            <person name="Skrzypek M.S."/>
            <person name="Miyasato S.R."/>
            <person name="Simison M."/>
            <person name="Cherry J.M."/>
        </authorList>
    </citation>
    <scope>GENOME REANNOTATION</scope>
    <source>
        <strain>ATCC 204508 / S288c</strain>
    </source>
</reference>
<reference key="5">
    <citation type="journal article" date="2007" name="Genome Res.">
        <title>Approaching a complete repository of sequence-verified protein-encoding clones for Saccharomyces cerevisiae.</title>
        <authorList>
            <person name="Hu Y."/>
            <person name="Rolfs A."/>
            <person name="Bhullar B."/>
            <person name="Murthy T.V.S."/>
            <person name="Zhu C."/>
            <person name="Berger M.F."/>
            <person name="Camargo A.A."/>
            <person name="Kelley F."/>
            <person name="McCarron S."/>
            <person name="Jepson D."/>
            <person name="Richardson A."/>
            <person name="Raphael J."/>
            <person name="Moreira D."/>
            <person name="Taycher E."/>
            <person name="Zuo D."/>
            <person name="Mohr S."/>
            <person name="Kane M.F."/>
            <person name="Williamson J."/>
            <person name="Simpson A.J.G."/>
            <person name="Bulyk M.L."/>
            <person name="Harlow E."/>
            <person name="Marsischky G."/>
            <person name="Kolodner R.D."/>
            <person name="LaBaer J."/>
        </authorList>
    </citation>
    <scope>NUCLEOTIDE SEQUENCE [GENOMIC DNA]</scope>
    <source>
        <strain>ATCC 204508 / S288c</strain>
    </source>
</reference>
<reference key="6">
    <citation type="journal article" date="1998" name="EMBO J.">
        <title>Multiple transcriptional activation complexes tether the yeast activator Met4 to DNA.</title>
        <authorList>
            <person name="Blaiseau P.L."/>
            <person name="Thomas D."/>
        </authorList>
    </citation>
    <scope>INDUCTION</scope>
</reference>
<reference key="7">
    <citation type="journal article" date="2003" name="Nature">
        <title>Global analysis of protein localization in budding yeast.</title>
        <authorList>
            <person name="Huh W.-K."/>
            <person name="Falvo J.V."/>
            <person name="Gerke L.C."/>
            <person name="Carroll A.S."/>
            <person name="Howson R.W."/>
            <person name="Weissman J.S."/>
            <person name="O'Shea E.K."/>
        </authorList>
    </citation>
    <scope>SUBCELLULAR LOCATION [LARGE SCALE ANALYSIS]</scope>
</reference>
<reference key="8">
    <citation type="journal article" date="2003" name="Nature">
        <title>Global analysis of protein expression in yeast.</title>
        <authorList>
            <person name="Ghaemmaghami S."/>
            <person name="Huh W.-K."/>
            <person name="Bower K."/>
            <person name="Howson R.W."/>
            <person name="Belle A."/>
            <person name="Dephoure N."/>
            <person name="O'Shea E.K."/>
            <person name="Weissman J.S."/>
        </authorList>
    </citation>
    <scope>LEVEL OF PROTEIN EXPRESSION [LARGE SCALE ANALYSIS]</scope>
</reference>
<reference key="9">
    <citation type="journal article" date="2008" name="Mol. Cell. Proteomics">
        <title>A multidimensional chromatography technology for in-depth phosphoproteome analysis.</title>
        <authorList>
            <person name="Albuquerque C.P."/>
            <person name="Smolka M.B."/>
            <person name="Payne S.H."/>
            <person name="Bafna V."/>
            <person name="Eng J."/>
            <person name="Zhou H."/>
        </authorList>
    </citation>
    <scope>IDENTIFICATION BY MASS SPECTROMETRY [LARGE SCALE ANALYSIS]</scope>
</reference>
<reference key="10">
    <citation type="journal article" date="2012" name="Proc. Natl. Acad. Sci. U.S.A.">
        <title>N-terminal acetylome analyses and functional insights of the N-terminal acetyltransferase NatB.</title>
        <authorList>
            <person name="Van Damme P."/>
            <person name="Lasa M."/>
            <person name="Polevoda B."/>
            <person name="Gazquez C."/>
            <person name="Elosegui-Artola A."/>
            <person name="Kim D.S."/>
            <person name="De Juan-Pardo E."/>
            <person name="Demeyer K."/>
            <person name="Hole K."/>
            <person name="Larrea E."/>
            <person name="Timmerman E."/>
            <person name="Prieto J."/>
            <person name="Arnesen T."/>
            <person name="Sherman F."/>
            <person name="Gevaert K."/>
            <person name="Aldabe R."/>
        </authorList>
    </citation>
    <scope>IDENTIFICATION BY MASS SPECTROMETRY [LARGE SCALE ANALYSIS]</scope>
</reference>
<reference key="11">
    <citation type="journal article" date="2001" name="EMBO J.">
        <title>Crystal structure of ATP sulfurylase from Saccharomyces cerevisiae, a key enzyme in sulfate activation.</title>
        <authorList>
            <person name="Ullrich T.C."/>
            <person name="Blaesse M."/>
            <person name="Huber R."/>
        </authorList>
    </citation>
    <scope>X-RAY CRYSTALLOGRAPHY (1.95 ANGSTROMS) IN COMPLEX WITH SUBSTRATE ANALOGS</scope>
    <scope>SUBUNIT</scope>
    <scope>DOMAIN</scope>
    <scope>ACTIVE SITE</scope>
    <source>
        <strain>ATCC 96604 / S288c / FY1679</strain>
    </source>
</reference>
<reference key="12">
    <citation type="journal article" date="2003" name="Protein Eng.">
        <title>Structural and functional analysis of a truncated form of Saccharomyces cerevisiae ATP sulfurylase: C-terminal domain essential for oligomer formation but not for activity.</title>
        <authorList>
            <person name="Lalor D.J."/>
            <person name="Schnyder T."/>
            <person name="Saridakis V."/>
            <person name="Pilloff D.E."/>
            <person name="Dong A."/>
            <person name="Tang H."/>
            <person name="Leyh T.S."/>
            <person name="Pai E.F."/>
        </authorList>
    </citation>
    <scope>X-RAY CRYSTALLOGRAPHY (1.4 ANGSTROMS) OF 2-393 IN COMPLEX WITH SUBSTRATE ANALOGS</scope>
    <scope>BIOPHYSICOCHEMICAL PROPERTIES</scope>
    <scope>SUBUNIT</scope>
    <scope>DOMAIN</scope>
    <scope>ACTIVE SITE</scope>
</reference>
<proteinExistence type="evidence at protein level"/>